<reference key="1">
    <citation type="journal article" date="2006" name="Anim. Genet.">
        <title>A gene-based radiation hybrid map of the pig chromosome 6q32 region associated with a QTL for fat deposition traits.</title>
        <authorList>
            <person name="Kim J.H."/>
            <person name="Lim H.T."/>
            <person name="Park E.W."/>
            <person name="Ovilo C."/>
            <person name="Lee J.H."/>
            <person name="Jeon J.T."/>
        </authorList>
    </citation>
    <scope>NUCLEOTIDE SEQUENCE [MRNA]</scope>
</reference>
<name>S35DL_PIG</name>
<organism>
    <name type="scientific">Sus scrofa</name>
    <name type="common">Pig</name>
    <dbReference type="NCBI Taxonomy" id="9823"/>
    <lineage>
        <taxon>Eukaryota</taxon>
        <taxon>Metazoa</taxon>
        <taxon>Chordata</taxon>
        <taxon>Craniata</taxon>
        <taxon>Vertebrata</taxon>
        <taxon>Euteleostomi</taxon>
        <taxon>Mammalia</taxon>
        <taxon>Eutheria</taxon>
        <taxon>Laurasiatheria</taxon>
        <taxon>Artiodactyla</taxon>
        <taxon>Suina</taxon>
        <taxon>Suidae</taxon>
        <taxon>Sus</taxon>
    </lineage>
</organism>
<evidence type="ECO:0000255" key="1"/>
<evidence type="ECO:0000305" key="2"/>
<protein>
    <recommendedName>
        <fullName evidence="2">Solute carrier family 35 member D2-like protein</fullName>
    </recommendedName>
</protein>
<keyword id="KW-0472">Membrane</keyword>
<keyword id="KW-1185">Reference proteome</keyword>
<keyword id="KW-0812">Transmembrane</keyword>
<keyword id="KW-1133">Transmembrane helix</keyword>
<dbReference type="EMBL" id="DQ529289">
    <property type="protein sequence ID" value="ABG21116.1"/>
    <property type="molecule type" value="mRNA"/>
</dbReference>
<dbReference type="SMR" id="Q15B89"/>
<dbReference type="FunCoup" id="Q15B89">
    <property type="interactions" value="361"/>
</dbReference>
<dbReference type="STRING" id="9823.ENSSSCP00000056067"/>
<dbReference type="PaxDb" id="9823-ENSSSCP00000004112"/>
<dbReference type="eggNOG" id="KOG1444">
    <property type="taxonomic scope" value="Eukaryota"/>
</dbReference>
<dbReference type="InParanoid" id="Q15B89"/>
<dbReference type="ChiTaRS" id="SLC35D2">
    <property type="organism name" value="pig"/>
</dbReference>
<dbReference type="Proteomes" id="UP000008227">
    <property type="component" value="Unplaced"/>
</dbReference>
<dbReference type="Proteomes" id="UP000314985">
    <property type="component" value="Unplaced"/>
</dbReference>
<dbReference type="Proteomes" id="UP000694570">
    <property type="component" value="Unplaced"/>
</dbReference>
<dbReference type="Proteomes" id="UP000694571">
    <property type="component" value="Unplaced"/>
</dbReference>
<dbReference type="Proteomes" id="UP000694720">
    <property type="component" value="Unplaced"/>
</dbReference>
<dbReference type="Proteomes" id="UP000694722">
    <property type="component" value="Unplaced"/>
</dbReference>
<dbReference type="Proteomes" id="UP000694723">
    <property type="component" value="Unplaced"/>
</dbReference>
<dbReference type="Proteomes" id="UP000694724">
    <property type="component" value="Unplaced"/>
</dbReference>
<dbReference type="Proteomes" id="UP000694725">
    <property type="component" value="Unplaced"/>
</dbReference>
<dbReference type="Proteomes" id="UP000694726">
    <property type="component" value="Unplaced"/>
</dbReference>
<dbReference type="Proteomes" id="UP000694727">
    <property type="component" value="Unplaced"/>
</dbReference>
<dbReference type="Proteomes" id="UP000694728">
    <property type="component" value="Unplaced"/>
</dbReference>
<dbReference type="GO" id="GO:0005794">
    <property type="term" value="C:Golgi apparatus"/>
    <property type="evidence" value="ECO:0000318"/>
    <property type="project" value="GO_Central"/>
</dbReference>
<dbReference type="GO" id="GO:0016020">
    <property type="term" value="C:membrane"/>
    <property type="evidence" value="ECO:0007669"/>
    <property type="project" value="UniProtKB-SubCell"/>
</dbReference>
<dbReference type="GO" id="GO:0015297">
    <property type="term" value="F:antiporter activity"/>
    <property type="evidence" value="ECO:0000318"/>
    <property type="project" value="GO_Central"/>
</dbReference>
<dbReference type="GO" id="GO:0005461">
    <property type="term" value="F:UDP-glucuronate transmembrane transporter activity"/>
    <property type="evidence" value="ECO:0000318"/>
    <property type="project" value="GO_Central"/>
</dbReference>
<dbReference type="GO" id="GO:0005463">
    <property type="term" value="F:UDP-N-acetylgalactosamine transmembrane transporter activity"/>
    <property type="evidence" value="ECO:0000318"/>
    <property type="project" value="GO_Central"/>
</dbReference>
<dbReference type="GO" id="GO:0005462">
    <property type="term" value="F:UDP-N-acetylglucosamine transmembrane transporter activity"/>
    <property type="evidence" value="ECO:0000318"/>
    <property type="project" value="GO_Central"/>
</dbReference>
<dbReference type="GO" id="GO:0015780">
    <property type="term" value="P:nucleotide-sugar transmembrane transport"/>
    <property type="evidence" value="ECO:0000318"/>
    <property type="project" value="GO_Central"/>
</dbReference>
<dbReference type="InterPro" id="IPR004853">
    <property type="entry name" value="Sugar_P_trans_dom"/>
</dbReference>
<dbReference type="InterPro" id="IPR050186">
    <property type="entry name" value="TPT_transporter"/>
</dbReference>
<dbReference type="PANTHER" id="PTHR11132">
    <property type="entry name" value="SOLUTE CARRIER FAMILY 35"/>
    <property type="match status" value="1"/>
</dbReference>
<dbReference type="Pfam" id="PF03151">
    <property type="entry name" value="TPT"/>
    <property type="match status" value="1"/>
</dbReference>
<sequence length="343" mass="37806">KGEAPAKSSTHRHDEELGMASAETLTVFLKLLAAGFYGVSSFLIVVVNKSVLTNYRFPSSLCVGLGQMVATVAVLWVGKALRVVKFPDFDRNVPRKTFPLPLLYFGNQITGLFSTKKLNLPMFTVLRRFSILFTMFAEGVLLKKTFSWGIKMTVFAMIIGAFVAASSDLAFDLEGYVFILINDVLTAANGAYVKQKLDSKELGKYGLLYYNALFMILPTLAIAYITGDAQKAMDFEGWADTLFLLQFTLSCVMGFILMYATVLCTQYNSALTTTIVGCIKNILITYIGMVFGGDYIFTWTNFIGLNISIAGSLVYSYITFSEEQLSKQSEASNKLDNKGKGAV</sequence>
<accession>Q15B89</accession>
<proteinExistence type="evidence at transcript level"/>
<comment type="subcellular location">
    <subcellularLocation>
        <location evidence="1">Membrane</location>
        <topology evidence="1">Multi-pass membrane protein</topology>
    </subcellularLocation>
</comment>
<comment type="similarity">
    <text evidence="2">Belongs to the TPT transporter family. SLC35D subfamily.</text>
</comment>
<feature type="chain" id="PRO_0000313082" description="Solute carrier family 35 member D2-like protein">
    <location>
        <begin position="1" status="less than"/>
        <end position="343"/>
    </location>
</feature>
<feature type="topological domain" description="Cytoplasmic" evidence="1">
    <location>
        <begin position="1"/>
        <end position="26"/>
    </location>
</feature>
<feature type="transmembrane region" description="Helical" evidence="1">
    <location>
        <begin position="27"/>
        <end position="47"/>
    </location>
</feature>
<feature type="topological domain" description="Extracellular" evidence="1">
    <location>
        <begin position="48"/>
        <end position="56"/>
    </location>
</feature>
<feature type="transmembrane region" description="Helical" evidence="1">
    <location>
        <begin position="57"/>
        <end position="77"/>
    </location>
</feature>
<feature type="topological domain" description="Cytoplasmic" evidence="1">
    <location>
        <begin position="78"/>
        <end position="144"/>
    </location>
</feature>
<feature type="transmembrane region" description="Helical" evidence="1">
    <location>
        <begin position="145"/>
        <end position="165"/>
    </location>
</feature>
<feature type="topological domain" description="Extracellular" evidence="1">
    <location>
        <begin position="166"/>
        <end position="172"/>
    </location>
</feature>
<feature type="transmembrane region" description="Helical" evidence="1">
    <location>
        <begin position="173"/>
        <end position="193"/>
    </location>
</feature>
<feature type="topological domain" description="Cytoplasmic" evidence="1">
    <location>
        <begin position="194"/>
        <end position="204"/>
    </location>
</feature>
<feature type="transmembrane region" description="Helical" evidence="1">
    <location>
        <begin position="205"/>
        <end position="225"/>
    </location>
</feature>
<feature type="topological domain" description="Extracellular" evidence="1">
    <location>
        <begin position="226"/>
        <end position="241"/>
    </location>
</feature>
<feature type="transmembrane region" description="Helical" evidence="1">
    <location>
        <begin position="242"/>
        <end position="262"/>
    </location>
</feature>
<feature type="topological domain" description="Cytoplasmic" evidence="1">
    <location>
        <begin position="263"/>
        <end position="268"/>
    </location>
</feature>
<feature type="transmembrane region" description="Helical" evidence="1">
    <location>
        <begin position="269"/>
        <end position="291"/>
    </location>
</feature>
<feature type="topological domain" description="Extracellular" evidence="1">
    <location>
        <begin position="292"/>
        <end position="302"/>
    </location>
</feature>
<feature type="transmembrane region" description="Helical" evidence="1">
    <location>
        <begin position="303"/>
        <end position="323"/>
    </location>
</feature>
<feature type="topological domain" description="Cytoplasmic" evidence="1">
    <location>
        <begin position="324"/>
        <end position="343"/>
    </location>
</feature>
<feature type="non-terminal residue">
    <location>
        <position position="1"/>
    </location>
</feature>